<gene>
    <name evidence="1" type="primary">glmU</name>
    <name type="ordered locus">Asuc_0547</name>
</gene>
<evidence type="ECO:0000255" key="1">
    <source>
        <dbReference type="HAMAP-Rule" id="MF_01631"/>
    </source>
</evidence>
<dbReference type="EC" id="2.7.7.23" evidence="1"/>
<dbReference type="EC" id="2.3.1.157" evidence="1"/>
<dbReference type="EMBL" id="CP000746">
    <property type="protein sequence ID" value="ABR73922.1"/>
    <property type="molecule type" value="Genomic_DNA"/>
</dbReference>
<dbReference type="RefSeq" id="WP_012072302.1">
    <property type="nucleotide sequence ID" value="NC_009655.1"/>
</dbReference>
<dbReference type="SMR" id="A6VLS5"/>
<dbReference type="STRING" id="339671.Asuc_0547"/>
<dbReference type="KEGG" id="asu:Asuc_0547"/>
<dbReference type="eggNOG" id="COG1207">
    <property type="taxonomic scope" value="Bacteria"/>
</dbReference>
<dbReference type="HOGENOM" id="CLU_029499_15_2_6"/>
<dbReference type="OrthoDB" id="9775031at2"/>
<dbReference type="UniPathway" id="UPA00113">
    <property type="reaction ID" value="UER00532"/>
</dbReference>
<dbReference type="UniPathway" id="UPA00113">
    <property type="reaction ID" value="UER00533"/>
</dbReference>
<dbReference type="UniPathway" id="UPA00973"/>
<dbReference type="Proteomes" id="UP000001114">
    <property type="component" value="Chromosome"/>
</dbReference>
<dbReference type="GO" id="GO:0005737">
    <property type="term" value="C:cytoplasm"/>
    <property type="evidence" value="ECO:0007669"/>
    <property type="project" value="UniProtKB-SubCell"/>
</dbReference>
<dbReference type="GO" id="GO:0016020">
    <property type="term" value="C:membrane"/>
    <property type="evidence" value="ECO:0007669"/>
    <property type="project" value="GOC"/>
</dbReference>
<dbReference type="GO" id="GO:0019134">
    <property type="term" value="F:glucosamine-1-phosphate N-acetyltransferase activity"/>
    <property type="evidence" value="ECO:0007669"/>
    <property type="project" value="UniProtKB-UniRule"/>
</dbReference>
<dbReference type="GO" id="GO:0000287">
    <property type="term" value="F:magnesium ion binding"/>
    <property type="evidence" value="ECO:0007669"/>
    <property type="project" value="UniProtKB-UniRule"/>
</dbReference>
<dbReference type="GO" id="GO:0003977">
    <property type="term" value="F:UDP-N-acetylglucosamine diphosphorylase activity"/>
    <property type="evidence" value="ECO:0007669"/>
    <property type="project" value="UniProtKB-UniRule"/>
</dbReference>
<dbReference type="GO" id="GO:0000902">
    <property type="term" value="P:cell morphogenesis"/>
    <property type="evidence" value="ECO:0007669"/>
    <property type="project" value="UniProtKB-UniRule"/>
</dbReference>
<dbReference type="GO" id="GO:0071555">
    <property type="term" value="P:cell wall organization"/>
    <property type="evidence" value="ECO:0007669"/>
    <property type="project" value="UniProtKB-KW"/>
</dbReference>
<dbReference type="GO" id="GO:0009245">
    <property type="term" value="P:lipid A biosynthetic process"/>
    <property type="evidence" value="ECO:0007669"/>
    <property type="project" value="UniProtKB-UniRule"/>
</dbReference>
<dbReference type="GO" id="GO:0009252">
    <property type="term" value="P:peptidoglycan biosynthetic process"/>
    <property type="evidence" value="ECO:0007669"/>
    <property type="project" value="UniProtKB-UniRule"/>
</dbReference>
<dbReference type="GO" id="GO:0008360">
    <property type="term" value="P:regulation of cell shape"/>
    <property type="evidence" value="ECO:0007669"/>
    <property type="project" value="UniProtKB-KW"/>
</dbReference>
<dbReference type="GO" id="GO:0006048">
    <property type="term" value="P:UDP-N-acetylglucosamine biosynthetic process"/>
    <property type="evidence" value="ECO:0007669"/>
    <property type="project" value="UniProtKB-UniPathway"/>
</dbReference>
<dbReference type="CDD" id="cd02540">
    <property type="entry name" value="GT2_GlmU_N_bac"/>
    <property type="match status" value="1"/>
</dbReference>
<dbReference type="CDD" id="cd03353">
    <property type="entry name" value="LbH_GlmU_C"/>
    <property type="match status" value="1"/>
</dbReference>
<dbReference type="FunFam" id="3.90.550.10:FF:000006">
    <property type="entry name" value="Bifunctional protein GlmU"/>
    <property type="match status" value="1"/>
</dbReference>
<dbReference type="Gene3D" id="2.160.10.10">
    <property type="entry name" value="Hexapeptide repeat proteins"/>
    <property type="match status" value="1"/>
</dbReference>
<dbReference type="Gene3D" id="3.90.550.10">
    <property type="entry name" value="Spore Coat Polysaccharide Biosynthesis Protein SpsA, Chain A"/>
    <property type="match status" value="1"/>
</dbReference>
<dbReference type="HAMAP" id="MF_01631">
    <property type="entry name" value="GlmU"/>
    <property type="match status" value="1"/>
</dbReference>
<dbReference type="InterPro" id="IPR005882">
    <property type="entry name" value="Bifunctional_GlmU"/>
</dbReference>
<dbReference type="InterPro" id="IPR050065">
    <property type="entry name" value="GlmU-like"/>
</dbReference>
<dbReference type="InterPro" id="IPR038009">
    <property type="entry name" value="GlmU_C_LbH"/>
</dbReference>
<dbReference type="InterPro" id="IPR001451">
    <property type="entry name" value="Hexapep"/>
</dbReference>
<dbReference type="InterPro" id="IPR018357">
    <property type="entry name" value="Hexapep_transf_CS"/>
</dbReference>
<dbReference type="InterPro" id="IPR025877">
    <property type="entry name" value="MobA-like_NTP_Trfase"/>
</dbReference>
<dbReference type="InterPro" id="IPR029044">
    <property type="entry name" value="Nucleotide-diphossugar_trans"/>
</dbReference>
<dbReference type="InterPro" id="IPR011004">
    <property type="entry name" value="Trimer_LpxA-like_sf"/>
</dbReference>
<dbReference type="NCBIfam" id="TIGR01173">
    <property type="entry name" value="glmU"/>
    <property type="match status" value="1"/>
</dbReference>
<dbReference type="NCBIfam" id="NF006986">
    <property type="entry name" value="PRK09451.1"/>
    <property type="match status" value="1"/>
</dbReference>
<dbReference type="PANTHER" id="PTHR43584:SF3">
    <property type="entry name" value="BIFUNCTIONAL PROTEIN GLMU"/>
    <property type="match status" value="1"/>
</dbReference>
<dbReference type="PANTHER" id="PTHR43584">
    <property type="entry name" value="NUCLEOTIDYL TRANSFERASE"/>
    <property type="match status" value="1"/>
</dbReference>
<dbReference type="Pfam" id="PF00132">
    <property type="entry name" value="Hexapep"/>
    <property type="match status" value="2"/>
</dbReference>
<dbReference type="Pfam" id="PF12804">
    <property type="entry name" value="NTP_transf_3"/>
    <property type="match status" value="1"/>
</dbReference>
<dbReference type="SUPFAM" id="SSF53448">
    <property type="entry name" value="Nucleotide-diphospho-sugar transferases"/>
    <property type="match status" value="1"/>
</dbReference>
<dbReference type="SUPFAM" id="SSF51161">
    <property type="entry name" value="Trimeric LpxA-like enzymes"/>
    <property type="match status" value="1"/>
</dbReference>
<dbReference type="PROSITE" id="PS00101">
    <property type="entry name" value="HEXAPEP_TRANSFERASES"/>
    <property type="match status" value="1"/>
</dbReference>
<keyword id="KW-0012">Acyltransferase</keyword>
<keyword id="KW-0133">Cell shape</keyword>
<keyword id="KW-0961">Cell wall biogenesis/degradation</keyword>
<keyword id="KW-0963">Cytoplasm</keyword>
<keyword id="KW-0460">Magnesium</keyword>
<keyword id="KW-0479">Metal-binding</keyword>
<keyword id="KW-0511">Multifunctional enzyme</keyword>
<keyword id="KW-0548">Nucleotidyltransferase</keyword>
<keyword id="KW-0573">Peptidoglycan synthesis</keyword>
<keyword id="KW-1185">Reference proteome</keyword>
<keyword id="KW-0677">Repeat</keyword>
<keyword id="KW-0808">Transferase</keyword>
<name>GLMU_ACTSZ</name>
<feature type="chain" id="PRO_1000073643" description="Bifunctional protein GlmU">
    <location>
        <begin position="1"/>
        <end position="454"/>
    </location>
</feature>
<feature type="region of interest" description="Pyrophosphorylase" evidence="1">
    <location>
        <begin position="1"/>
        <end position="227"/>
    </location>
</feature>
<feature type="region of interest" description="Linker" evidence="1">
    <location>
        <begin position="228"/>
        <end position="248"/>
    </location>
</feature>
<feature type="region of interest" description="N-acetyltransferase" evidence="1">
    <location>
        <begin position="249"/>
        <end position="454"/>
    </location>
</feature>
<feature type="active site" description="Proton acceptor" evidence="1">
    <location>
        <position position="361"/>
    </location>
</feature>
<feature type="binding site" evidence="1">
    <location>
        <begin position="9"/>
        <end position="12"/>
    </location>
    <ligand>
        <name>UDP-N-acetyl-alpha-D-glucosamine</name>
        <dbReference type="ChEBI" id="CHEBI:57705"/>
    </ligand>
</feature>
<feature type="binding site" evidence="1">
    <location>
        <position position="23"/>
    </location>
    <ligand>
        <name>UDP-N-acetyl-alpha-D-glucosamine</name>
        <dbReference type="ChEBI" id="CHEBI:57705"/>
    </ligand>
</feature>
<feature type="binding site" evidence="1">
    <location>
        <position position="74"/>
    </location>
    <ligand>
        <name>UDP-N-acetyl-alpha-D-glucosamine</name>
        <dbReference type="ChEBI" id="CHEBI:57705"/>
    </ligand>
</feature>
<feature type="binding site" evidence="1">
    <location>
        <begin position="79"/>
        <end position="80"/>
    </location>
    <ligand>
        <name>UDP-N-acetyl-alpha-D-glucosamine</name>
        <dbReference type="ChEBI" id="CHEBI:57705"/>
    </ligand>
</feature>
<feature type="binding site" evidence="1">
    <location>
        <begin position="101"/>
        <end position="103"/>
    </location>
    <ligand>
        <name>UDP-N-acetyl-alpha-D-glucosamine</name>
        <dbReference type="ChEBI" id="CHEBI:57705"/>
    </ligand>
</feature>
<feature type="binding site" evidence="1">
    <location>
        <position position="103"/>
    </location>
    <ligand>
        <name>Mg(2+)</name>
        <dbReference type="ChEBI" id="CHEBI:18420"/>
    </ligand>
</feature>
<feature type="binding site" evidence="1">
    <location>
        <position position="138"/>
    </location>
    <ligand>
        <name>UDP-N-acetyl-alpha-D-glucosamine</name>
        <dbReference type="ChEBI" id="CHEBI:57705"/>
    </ligand>
</feature>
<feature type="binding site" evidence="1">
    <location>
        <position position="152"/>
    </location>
    <ligand>
        <name>UDP-N-acetyl-alpha-D-glucosamine</name>
        <dbReference type="ChEBI" id="CHEBI:57705"/>
    </ligand>
</feature>
<feature type="binding site" evidence="1">
    <location>
        <position position="167"/>
    </location>
    <ligand>
        <name>UDP-N-acetyl-alpha-D-glucosamine</name>
        <dbReference type="ChEBI" id="CHEBI:57705"/>
    </ligand>
</feature>
<feature type="binding site" evidence="1">
    <location>
        <position position="225"/>
    </location>
    <ligand>
        <name>Mg(2+)</name>
        <dbReference type="ChEBI" id="CHEBI:18420"/>
    </ligand>
</feature>
<feature type="binding site" evidence="1">
    <location>
        <position position="225"/>
    </location>
    <ligand>
        <name>UDP-N-acetyl-alpha-D-glucosamine</name>
        <dbReference type="ChEBI" id="CHEBI:57705"/>
    </ligand>
</feature>
<feature type="binding site" evidence="1">
    <location>
        <position position="331"/>
    </location>
    <ligand>
        <name>UDP-N-acetyl-alpha-D-glucosamine</name>
        <dbReference type="ChEBI" id="CHEBI:57705"/>
    </ligand>
</feature>
<feature type="binding site" evidence="1">
    <location>
        <position position="349"/>
    </location>
    <ligand>
        <name>UDP-N-acetyl-alpha-D-glucosamine</name>
        <dbReference type="ChEBI" id="CHEBI:57705"/>
    </ligand>
</feature>
<feature type="binding site" evidence="1">
    <location>
        <position position="364"/>
    </location>
    <ligand>
        <name>UDP-N-acetyl-alpha-D-glucosamine</name>
        <dbReference type="ChEBI" id="CHEBI:57705"/>
    </ligand>
</feature>
<feature type="binding site" evidence="1">
    <location>
        <position position="375"/>
    </location>
    <ligand>
        <name>UDP-N-acetyl-alpha-D-glucosamine</name>
        <dbReference type="ChEBI" id="CHEBI:57705"/>
    </ligand>
</feature>
<feature type="binding site" evidence="1">
    <location>
        <position position="378"/>
    </location>
    <ligand>
        <name>acetyl-CoA</name>
        <dbReference type="ChEBI" id="CHEBI:57288"/>
    </ligand>
</feature>
<feature type="binding site" evidence="1">
    <location>
        <begin position="384"/>
        <end position="385"/>
    </location>
    <ligand>
        <name>acetyl-CoA</name>
        <dbReference type="ChEBI" id="CHEBI:57288"/>
    </ligand>
</feature>
<feature type="binding site" evidence="1">
    <location>
        <position position="403"/>
    </location>
    <ligand>
        <name>acetyl-CoA</name>
        <dbReference type="ChEBI" id="CHEBI:57288"/>
    </ligand>
</feature>
<feature type="binding site" evidence="1">
    <location>
        <position position="421"/>
    </location>
    <ligand>
        <name>acetyl-CoA</name>
        <dbReference type="ChEBI" id="CHEBI:57288"/>
    </ligand>
</feature>
<feature type="binding site" evidence="1">
    <location>
        <position position="438"/>
    </location>
    <ligand>
        <name>acetyl-CoA</name>
        <dbReference type="ChEBI" id="CHEBI:57288"/>
    </ligand>
</feature>
<accession>A6VLS5</accession>
<sequence length="454" mass="48708">MSKLSVVILAAGKGTRMYSDLPKVLHKVAGKPMVKHVIDTAKQLSAEQIHLIYGHGADLLKERLADEPVNWVFQAEQLGTGHAMQQAAPFFKDDENIVMLYGDAPLITKETLERLVAAKPENGIALLTVELENPTGYGRIIRENGSVVAIVEQKDATPEQLKITEVNTGVMVSDGASFKKWLARLDNDNAQGEYYMTDVIGLANQDGFKVAAVTADDMMEVEGANNRLQLAALERYFQRKQATALLLAGVSLADPERFDLRGELEHGKDVEIDVNVIIEGKVKLGNGVKIGAGCVLKNAIIGDNTEIKPYSVLEDSSVGEQAAIGPFSRLRPGAELAAETHVGNFVEIKKAVVGKGTKVNHLTYVGDAEIGSGCNIGAGVITCNYDGANKFKTLIGDNVFVGSDVQLVAPVKVNNGATIGAGSTITKDVAAGELVTTRVPQRHTADWERPSKKK</sequence>
<comment type="function">
    <text evidence="1">Catalyzes the last two sequential reactions in the de novo biosynthetic pathway for UDP-N-acetylglucosamine (UDP-GlcNAc). The C-terminal domain catalyzes the transfer of acetyl group from acetyl coenzyme A to glucosamine-1-phosphate (GlcN-1-P) to produce N-acetylglucosamine-1-phosphate (GlcNAc-1-P), which is converted into UDP-GlcNAc by the transfer of uridine 5-monophosphate (from uridine 5-triphosphate), a reaction catalyzed by the N-terminal domain.</text>
</comment>
<comment type="catalytic activity">
    <reaction evidence="1">
        <text>alpha-D-glucosamine 1-phosphate + acetyl-CoA = N-acetyl-alpha-D-glucosamine 1-phosphate + CoA + H(+)</text>
        <dbReference type="Rhea" id="RHEA:13725"/>
        <dbReference type="ChEBI" id="CHEBI:15378"/>
        <dbReference type="ChEBI" id="CHEBI:57287"/>
        <dbReference type="ChEBI" id="CHEBI:57288"/>
        <dbReference type="ChEBI" id="CHEBI:57776"/>
        <dbReference type="ChEBI" id="CHEBI:58516"/>
        <dbReference type="EC" id="2.3.1.157"/>
    </reaction>
</comment>
<comment type="catalytic activity">
    <reaction evidence="1">
        <text>N-acetyl-alpha-D-glucosamine 1-phosphate + UTP + H(+) = UDP-N-acetyl-alpha-D-glucosamine + diphosphate</text>
        <dbReference type="Rhea" id="RHEA:13509"/>
        <dbReference type="ChEBI" id="CHEBI:15378"/>
        <dbReference type="ChEBI" id="CHEBI:33019"/>
        <dbReference type="ChEBI" id="CHEBI:46398"/>
        <dbReference type="ChEBI" id="CHEBI:57705"/>
        <dbReference type="ChEBI" id="CHEBI:57776"/>
        <dbReference type="EC" id="2.7.7.23"/>
    </reaction>
</comment>
<comment type="cofactor">
    <cofactor evidence="1">
        <name>Mg(2+)</name>
        <dbReference type="ChEBI" id="CHEBI:18420"/>
    </cofactor>
    <text evidence="1">Binds 1 Mg(2+) ion per subunit.</text>
</comment>
<comment type="pathway">
    <text evidence="1">Nucleotide-sugar biosynthesis; UDP-N-acetyl-alpha-D-glucosamine biosynthesis; N-acetyl-alpha-D-glucosamine 1-phosphate from alpha-D-glucosamine 6-phosphate (route II): step 2/2.</text>
</comment>
<comment type="pathway">
    <text evidence="1">Nucleotide-sugar biosynthesis; UDP-N-acetyl-alpha-D-glucosamine biosynthesis; UDP-N-acetyl-alpha-D-glucosamine from N-acetyl-alpha-D-glucosamine 1-phosphate: step 1/1.</text>
</comment>
<comment type="pathway">
    <text evidence="1">Bacterial outer membrane biogenesis; LPS lipid A biosynthesis.</text>
</comment>
<comment type="subunit">
    <text evidence="1">Homotrimer.</text>
</comment>
<comment type="subcellular location">
    <subcellularLocation>
        <location evidence="1">Cytoplasm</location>
    </subcellularLocation>
</comment>
<comment type="similarity">
    <text evidence="1">In the N-terminal section; belongs to the N-acetylglucosamine-1-phosphate uridyltransferase family.</text>
</comment>
<comment type="similarity">
    <text evidence="1">In the C-terminal section; belongs to the transferase hexapeptide repeat family.</text>
</comment>
<organism>
    <name type="scientific">Actinobacillus succinogenes (strain ATCC 55618 / DSM 22257 / CCUG 43843 / 130Z)</name>
    <dbReference type="NCBI Taxonomy" id="339671"/>
    <lineage>
        <taxon>Bacteria</taxon>
        <taxon>Pseudomonadati</taxon>
        <taxon>Pseudomonadota</taxon>
        <taxon>Gammaproteobacteria</taxon>
        <taxon>Pasteurellales</taxon>
        <taxon>Pasteurellaceae</taxon>
        <taxon>Actinobacillus</taxon>
    </lineage>
</organism>
<reference key="1">
    <citation type="journal article" date="2010" name="BMC Genomics">
        <title>A genomic perspective on the potential of Actinobacillus succinogenes for industrial succinate production.</title>
        <authorList>
            <person name="McKinlay J.B."/>
            <person name="Laivenieks M."/>
            <person name="Schindler B.D."/>
            <person name="McKinlay A.A."/>
            <person name="Siddaramappa S."/>
            <person name="Challacombe J.F."/>
            <person name="Lowry S.R."/>
            <person name="Clum A."/>
            <person name="Lapidus A.L."/>
            <person name="Burkhart K.B."/>
            <person name="Harkins V."/>
            <person name="Vieille C."/>
        </authorList>
    </citation>
    <scope>NUCLEOTIDE SEQUENCE [LARGE SCALE GENOMIC DNA]</scope>
    <source>
        <strain>ATCC 55618 / DSM 22257 / CCUG 43843 / 130Z</strain>
    </source>
</reference>
<protein>
    <recommendedName>
        <fullName evidence="1">Bifunctional protein GlmU</fullName>
    </recommendedName>
    <domain>
        <recommendedName>
            <fullName evidence="1">UDP-N-acetylglucosamine pyrophosphorylase</fullName>
            <ecNumber evidence="1">2.7.7.23</ecNumber>
        </recommendedName>
        <alternativeName>
            <fullName evidence="1">N-acetylglucosamine-1-phosphate uridyltransferase</fullName>
        </alternativeName>
    </domain>
    <domain>
        <recommendedName>
            <fullName evidence="1">Glucosamine-1-phosphate N-acetyltransferase</fullName>
            <ecNumber evidence="1">2.3.1.157</ecNumber>
        </recommendedName>
    </domain>
</protein>
<proteinExistence type="inferred from homology"/>